<comment type="alternative products">
    <event type="alternative splicing"/>
    <isoform>
        <id>Q39072-1</id>
        <name>1</name>
        <sequence type="displayed"/>
    </isoform>
    <text>A number of isoforms are produced. According to EST sequences.</text>
</comment>
<comment type="tissue specificity">
    <text evidence="2">Expressed in roots, stems and flowers.</text>
</comment>
<comment type="developmental stage">
    <text evidence="1">Starts to be expressed during the S phase, reaches a peak at mitosis and then decreases.</text>
</comment>
<comment type="similarity">
    <text evidence="3">Belongs to the cyclin family. Cyclin AB subfamily.</text>
</comment>
<comment type="sequence caution" evidence="3">
    <conflict type="miscellaneous discrepancy">
        <sequence resource="EMBL-CDS" id="AAA19880"/>
    </conflict>
    <text>Sequencing errors.</text>
</comment>
<comment type="sequence caution" evidence="3">
    <conflict type="erroneous gene model prediction">
        <sequence resource="EMBL-CDS" id="AAF79265"/>
    </conflict>
</comment>
<accession>Q39072</accession>
<accession>F4HUZ7</accession>
<accession>Q9LNK6</accession>
<feature type="chain" id="PRO_0000287007" description="Cyclin-B1-5">
    <location>
        <begin position="1"/>
        <end position="491"/>
    </location>
</feature>
<feature type="domain" description="Cyclin N-terminal">
    <location>
        <begin position="275"/>
        <end position="347"/>
    </location>
</feature>
<evidence type="ECO:0000269" key="1">
    <source>
    </source>
</evidence>
<evidence type="ECO:0000269" key="2">
    <source>
    </source>
</evidence>
<evidence type="ECO:0000305" key="3"/>
<sequence length="491" mass="55430">MAHYINIYGKRLFDIGLYLKTSVDLILQQQHVLMSQQKFTDISLCHREAPNPKLDLPDDNRLSPLTELEDIGQQSKTLGTAIHRKISEQKRVIESGSVASIVEHKRTNLSAIMATRANIPEQVRGAPLVDGLKIQNKNGAVKNRRALGDIGNLVSVPGVQGGKAQPPINRPITLSFRAQLLANAQLERKPINGDNKVPALGPKSQPLAARNPEAQRAVQKKNLVVKQQTKPVEVIETKRNAQSKAACGIVNKPKILDIDESDKDNHVAAVEYVDDMYSFYKEVEKESQPKMYMHIQTEMNEKMRAILIDWLLEVHIKFELNLETLYLTVNIIDRFLYVKAVPKRELQVNDLVYVTDNAYSSRQILVMKKAILGNLEWYLTIPTQYVFLFCFIKASISDPEVLHVQKKNLQASKTKSFSIQVLSFSSHKSIVKSDQFCKKFNLCQEVTALASEFHLGNCEAWRETVTKLKDPETKCLKVVFEYTASDACGYG</sequence>
<reference key="1">
    <citation type="journal article" date="2000" name="Nature">
        <title>Sequence and analysis of chromosome 1 of the plant Arabidopsis thaliana.</title>
        <authorList>
            <person name="Theologis A."/>
            <person name="Ecker J.R."/>
            <person name="Palm C.J."/>
            <person name="Federspiel N.A."/>
            <person name="Kaul S."/>
            <person name="White O."/>
            <person name="Alonso J."/>
            <person name="Altafi H."/>
            <person name="Araujo R."/>
            <person name="Bowman C.L."/>
            <person name="Brooks S.Y."/>
            <person name="Buehler E."/>
            <person name="Chan A."/>
            <person name="Chao Q."/>
            <person name="Chen H."/>
            <person name="Cheuk R.F."/>
            <person name="Chin C.W."/>
            <person name="Chung M.K."/>
            <person name="Conn L."/>
            <person name="Conway A.B."/>
            <person name="Conway A.R."/>
            <person name="Creasy T.H."/>
            <person name="Dewar K."/>
            <person name="Dunn P."/>
            <person name="Etgu P."/>
            <person name="Feldblyum T.V."/>
            <person name="Feng J.-D."/>
            <person name="Fong B."/>
            <person name="Fujii C.Y."/>
            <person name="Gill J.E."/>
            <person name="Goldsmith A.D."/>
            <person name="Haas B."/>
            <person name="Hansen N.F."/>
            <person name="Hughes B."/>
            <person name="Huizar L."/>
            <person name="Hunter J.L."/>
            <person name="Jenkins J."/>
            <person name="Johnson-Hopson C."/>
            <person name="Khan S."/>
            <person name="Khaykin E."/>
            <person name="Kim C.J."/>
            <person name="Koo H.L."/>
            <person name="Kremenetskaia I."/>
            <person name="Kurtz D.B."/>
            <person name="Kwan A."/>
            <person name="Lam B."/>
            <person name="Langin-Hooper S."/>
            <person name="Lee A."/>
            <person name="Lee J.M."/>
            <person name="Lenz C.A."/>
            <person name="Li J.H."/>
            <person name="Li Y.-P."/>
            <person name="Lin X."/>
            <person name="Liu S.X."/>
            <person name="Liu Z.A."/>
            <person name="Luros J.S."/>
            <person name="Maiti R."/>
            <person name="Marziali A."/>
            <person name="Militscher J."/>
            <person name="Miranda M."/>
            <person name="Nguyen M."/>
            <person name="Nierman W.C."/>
            <person name="Osborne B.I."/>
            <person name="Pai G."/>
            <person name="Peterson J."/>
            <person name="Pham P.K."/>
            <person name="Rizzo M."/>
            <person name="Rooney T."/>
            <person name="Rowley D."/>
            <person name="Sakano H."/>
            <person name="Salzberg S.L."/>
            <person name="Schwartz J.R."/>
            <person name="Shinn P."/>
            <person name="Southwick A.M."/>
            <person name="Sun H."/>
            <person name="Tallon L.J."/>
            <person name="Tambunga G."/>
            <person name="Toriumi M.J."/>
            <person name="Town C.D."/>
            <person name="Utterback T."/>
            <person name="Van Aken S."/>
            <person name="Vaysberg M."/>
            <person name="Vysotskaia V.S."/>
            <person name="Walker M."/>
            <person name="Wu D."/>
            <person name="Yu G."/>
            <person name="Fraser C.M."/>
            <person name="Venter J.C."/>
            <person name="Davis R.W."/>
        </authorList>
    </citation>
    <scope>NUCLEOTIDE SEQUENCE [LARGE SCALE GENOMIC DNA]</scope>
    <source>
        <strain>cv. Columbia</strain>
    </source>
</reference>
<reference key="2">
    <citation type="journal article" date="2017" name="Plant J.">
        <title>Araport11: a complete reannotation of the Arabidopsis thaliana reference genome.</title>
        <authorList>
            <person name="Cheng C.Y."/>
            <person name="Krishnakumar V."/>
            <person name="Chan A.P."/>
            <person name="Thibaud-Nissen F."/>
            <person name="Schobel S."/>
            <person name="Town C.D."/>
        </authorList>
    </citation>
    <scope>GENOME REANNOTATION</scope>
    <source>
        <strain>cv. Columbia</strain>
    </source>
</reference>
<reference key="3">
    <citation type="journal article" date="1994" name="Biochim. Biophys. Acta">
        <title>Cloning of a family of cyclins from Arabidopsis thaliana.</title>
        <authorList>
            <person name="Day I.S."/>
            <person name="Reddy A.S."/>
        </authorList>
    </citation>
    <scope>NUCLEOTIDE SEQUENCE [MRNA] OF 303-348</scope>
    <source>
        <tissue>Flower meristem</tissue>
    </source>
</reference>
<reference key="4">
    <citation type="journal article" date="1996" name="Plant Physiol.">
        <title>Modulation of cyclin transcript levels in cultured cells of Arabidopsis thaliana.</title>
        <authorList>
            <person name="Fuerst R.A.U."/>
            <person name="Soni R."/>
            <person name="Murray J.A.H."/>
            <person name="Lindsey K."/>
        </authorList>
    </citation>
    <scope>DEVELOPMENTAL STAGE</scope>
</reference>
<reference key="5">
    <citation type="journal article" date="1998" name="Plant Mol. Biol.">
        <title>Isolation and characterization of two cyclin-like cDNAs from Arabidopsis.</title>
        <authorList>
            <person name="Day I.S."/>
            <person name="Reddy A.S."/>
        </authorList>
    </citation>
    <scope>TISSUE SPECIFICITY</scope>
</reference>
<reference key="6">
    <citation type="journal article" date="2004" name="Plant Physiol.">
        <title>Genome-wide analysis of the cyclin family in Arabidopsis and comparative phylogenetic analysis of plant cyclin-like proteins.</title>
        <authorList>
            <person name="Wang G."/>
            <person name="Kong H."/>
            <person name="Sun Y."/>
            <person name="Zhang X."/>
            <person name="Zhang W."/>
            <person name="Altman N."/>
            <person name="dePamphilis C.W."/>
            <person name="Ma H."/>
        </authorList>
    </citation>
    <scope>GENE FAMILY</scope>
    <scope>NOMENCLATURE</scope>
</reference>
<gene>
    <name type="primary">CYCB1-5</name>
    <name type="synonym">CYC3</name>
    <name type="ordered locus">At1g34460</name>
    <name type="ORF">F12K21.22</name>
</gene>
<organism>
    <name type="scientific">Arabidopsis thaliana</name>
    <name type="common">Mouse-ear cress</name>
    <dbReference type="NCBI Taxonomy" id="3702"/>
    <lineage>
        <taxon>Eukaryota</taxon>
        <taxon>Viridiplantae</taxon>
        <taxon>Streptophyta</taxon>
        <taxon>Embryophyta</taxon>
        <taxon>Tracheophyta</taxon>
        <taxon>Spermatophyta</taxon>
        <taxon>Magnoliopsida</taxon>
        <taxon>eudicotyledons</taxon>
        <taxon>Gunneridae</taxon>
        <taxon>Pentapetalae</taxon>
        <taxon>rosids</taxon>
        <taxon>malvids</taxon>
        <taxon>Brassicales</taxon>
        <taxon>Brassicaceae</taxon>
        <taxon>Camelineae</taxon>
        <taxon>Arabidopsis</taxon>
    </lineage>
</organism>
<keyword id="KW-0025">Alternative splicing</keyword>
<keyword id="KW-0131">Cell cycle</keyword>
<keyword id="KW-0132">Cell division</keyword>
<keyword id="KW-0195">Cyclin</keyword>
<keyword id="KW-1185">Reference proteome</keyword>
<dbReference type="EMBL" id="AC023279">
    <property type="protein sequence ID" value="AAF79265.1"/>
    <property type="status" value="ALT_SEQ"/>
    <property type="molecule type" value="Genomic_DNA"/>
</dbReference>
<dbReference type="EMBL" id="CP002684">
    <property type="protein sequence ID" value="AEE31715.1"/>
    <property type="molecule type" value="Genomic_DNA"/>
</dbReference>
<dbReference type="EMBL" id="CP002684">
    <property type="protein sequence ID" value="ANM57698.1"/>
    <property type="molecule type" value="Genomic_DNA"/>
</dbReference>
<dbReference type="EMBL" id="CP002684">
    <property type="protein sequence ID" value="ANM57702.1"/>
    <property type="molecule type" value="Genomic_DNA"/>
</dbReference>
<dbReference type="EMBL" id="CP002684">
    <property type="protein sequence ID" value="ANM57704.1"/>
    <property type="molecule type" value="Genomic_DNA"/>
</dbReference>
<dbReference type="EMBL" id="L27225">
    <property type="protein sequence ID" value="AAA19880.1"/>
    <property type="status" value="ALT_SEQ"/>
    <property type="molecule type" value="mRNA"/>
</dbReference>
<dbReference type="PIR" id="G86468">
    <property type="entry name" value="G86468"/>
</dbReference>
<dbReference type="PIR" id="S45295">
    <property type="entry name" value="S45295"/>
</dbReference>
<dbReference type="RefSeq" id="NP_001319145.1">
    <molecule id="Q39072-1"/>
    <property type="nucleotide sequence ID" value="NM_001333104.1"/>
</dbReference>
<dbReference type="RefSeq" id="NP_001320186.1">
    <molecule id="Q39072-1"/>
    <property type="nucleotide sequence ID" value="NM_001333106.1"/>
</dbReference>
<dbReference type="RefSeq" id="NP_001320190.1">
    <molecule id="Q39072-1"/>
    <property type="nucleotide sequence ID" value="NM_001333109.1"/>
</dbReference>
<dbReference type="RefSeq" id="NP_564446.3">
    <molecule id="Q39072-1"/>
    <property type="nucleotide sequence ID" value="NM_103168.4"/>
</dbReference>
<dbReference type="SMR" id="Q39072"/>
<dbReference type="FunCoup" id="Q39072">
    <property type="interactions" value="184"/>
</dbReference>
<dbReference type="STRING" id="3702.Q39072"/>
<dbReference type="PaxDb" id="3702-AT1G34460.1"/>
<dbReference type="EnsemblPlants" id="AT1G34460.1">
    <molecule id="Q39072-1"/>
    <property type="protein sequence ID" value="AT1G34460.1"/>
    <property type="gene ID" value="AT1G34460"/>
</dbReference>
<dbReference type="EnsemblPlants" id="AT1G34460.3">
    <molecule id="Q39072-1"/>
    <property type="protein sequence ID" value="AT1G34460.3"/>
    <property type="gene ID" value="AT1G34460"/>
</dbReference>
<dbReference type="EnsemblPlants" id="AT1G34460.6">
    <molecule id="Q39072-1"/>
    <property type="protein sequence ID" value="AT1G34460.6"/>
    <property type="gene ID" value="AT1G34460"/>
</dbReference>
<dbReference type="EnsemblPlants" id="AT1G34460.8">
    <molecule id="Q39072-1"/>
    <property type="protein sequence ID" value="AT1G34460.8"/>
    <property type="gene ID" value="AT1G34460"/>
</dbReference>
<dbReference type="GeneID" id="840348"/>
<dbReference type="Gramene" id="AT1G34460.1">
    <molecule id="Q39072-1"/>
    <property type="protein sequence ID" value="AT1G34460.1"/>
    <property type="gene ID" value="AT1G34460"/>
</dbReference>
<dbReference type="Gramene" id="AT1G34460.3">
    <molecule id="Q39072-1"/>
    <property type="protein sequence ID" value="AT1G34460.3"/>
    <property type="gene ID" value="AT1G34460"/>
</dbReference>
<dbReference type="Gramene" id="AT1G34460.6">
    <molecule id="Q39072-1"/>
    <property type="protein sequence ID" value="AT1G34460.6"/>
    <property type="gene ID" value="AT1G34460"/>
</dbReference>
<dbReference type="Gramene" id="AT1G34460.8">
    <molecule id="Q39072-1"/>
    <property type="protein sequence ID" value="AT1G34460.8"/>
    <property type="gene ID" value="AT1G34460"/>
</dbReference>
<dbReference type="KEGG" id="ath:AT1G34460"/>
<dbReference type="Araport" id="AT1G34460"/>
<dbReference type="TAIR" id="AT1G34460">
    <property type="gene designation" value="CYCB1"/>
</dbReference>
<dbReference type="eggNOG" id="KOG0653">
    <property type="taxonomic scope" value="Eukaryota"/>
</dbReference>
<dbReference type="eggNOG" id="KOG1340">
    <property type="taxonomic scope" value="Eukaryota"/>
</dbReference>
<dbReference type="HOGENOM" id="CLU_565458_0_0_1"/>
<dbReference type="InParanoid" id="Q39072"/>
<dbReference type="PRO" id="PR:Q39072"/>
<dbReference type="Proteomes" id="UP000006548">
    <property type="component" value="Chromosome 1"/>
</dbReference>
<dbReference type="ExpressionAtlas" id="Q39072">
    <property type="expression patterns" value="baseline and differential"/>
</dbReference>
<dbReference type="GO" id="GO:0051301">
    <property type="term" value="P:cell division"/>
    <property type="evidence" value="ECO:0007669"/>
    <property type="project" value="UniProtKB-KW"/>
</dbReference>
<dbReference type="FunFam" id="1.10.472.10:FF:000198">
    <property type="entry name" value="G2/mitotic-specific cyclin-B1"/>
    <property type="match status" value="1"/>
</dbReference>
<dbReference type="Gene3D" id="1.10.472.10">
    <property type="entry name" value="Cyclin-like"/>
    <property type="match status" value="1"/>
</dbReference>
<dbReference type="InterPro" id="IPR039361">
    <property type="entry name" value="Cyclin"/>
</dbReference>
<dbReference type="InterPro" id="IPR036915">
    <property type="entry name" value="Cyclin-like_sf"/>
</dbReference>
<dbReference type="InterPro" id="IPR006671">
    <property type="entry name" value="Cyclin_N"/>
</dbReference>
<dbReference type="InterPro" id="IPR048258">
    <property type="entry name" value="Cyclins_cyclin-box"/>
</dbReference>
<dbReference type="PANTHER" id="PTHR10177">
    <property type="entry name" value="CYCLINS"/>
    <property type="match status" value="1"/>
</dbReference>
<dbReference type="Pfam" id="PF00134">
    <property type="entry name" value="Cyclin_N"/>
    <property type="match status" value="1"/>
</dbReference>
<dbReference type="SUPFAM" id="SSF47954">
    <property type="entry name" value="Cyclin-like"/>
    <property type="match status" value="1"/>
</dbReference>
<dbReference type="PROSITE" id="PS00292">
    <property type="entry name" value="CYCLINS"/>
    <property type="match status" value="1"/>
</dbReference>
<name>CCB15_ARATH</name>
<proteinExistence type="evidence at transcript level"/>
<protein>
    <recommendedName>
        <fullName>Cyclin-B1-5</fullName>
    </recommendedName>
    <alternativeName>
        <fullName>Cyc3-At</fullName>
    </alternativeName>
    <alternativeName>
        <fullName>G2/mitotic-specific cyclin-B1-5</fullName>
        <shortName>CycB1;5</shortName>
    </alternativeName>
</protein>